<feature type="chain" id="PRO_1000021186" description="4-hydroxy-3-methylbut-2-enyl diphosphate reductase">
    <location>
        <begin position="1"/>
        <end position="406"/>
    </location>
</feature>
<feature type="active site" description="Proton donor" evidence="1">
    <location>
        <position position="187"/>
    </location>
</feature>
<feature type="binding site" evidence="1">
    <location>
        <position position="66"/>
    </location>
    <ligand>
        <name>[4Fe-4S] cluster</name>
        <dbReference type="ChEBI" id="CHEBI:49883"/>
    </ligand>
</feature>
<feature type="binding site" evidence="1">
    <location>
        <position position="96"/>
    </location>
    <ligand>
        <name>(2E)-4-hydroxy-3-methylbut-2-enyl diphosphate</name>
        <dbReference type="ChEBI" id="CHEBI:128753"/>
    </ligand>
</feature>
<feature type="binding site" evidence="1">
    <location>
        <position position="96"/>
    </location>
    <ligand>
        <name>dimethylallyl diphosphate</name>
        <dbReference type="ChEBI" id="CHEBI:57623"/>
    </ligand>
</feature>
<feature type="binding site" evidence="1">
    <location>
        <position position="96"/>
    </location>
    <ligand>
        <name>isopentenyl diphosphate</name>
        <dbReference type="ChEBI" id="CHEBI:128769"/>
    </ligand>
</feature>
<feature type="binding site" evidence="1">
    <location>
        <position position="157"/>
    </location>
    <ligand>
        <name>[4Fe-4S] cluster</name>
        <dbReference type="ChEBI" id="CHEBI:49883"/>
    </ligand>
</feature>
<feature type="binding site" evidence="1">
    <location>
        <position position="185"/>
    </location>
    <ligand>
        <name>(2E)-4-hydroxy-3-methylbut-2-enyl diphosphate</name>
        <dbReference type="ChEBI" id="CHEBI:128753"/>
    </ligand>
</feature>
<feature type="binding site" evidence="1">
    <location>
        <position position="185"/>
    </location>
    <ligand>
        <name>dimethylallyl diphosphate</name>
        <dbReference type="ChEBI" id="CHEBI:57623"/>
    </ligand>
</feature>
<feature type="binding site" evidence="1">
    <location>
        <position position="185"/>
    </location>
    <ligand>
        <name>isopentenyl diphosphate</name>
        <dbReference type="ChEBI" id="CHEBI:128769"/>
    </ligand>
</feature>
<feature type="binding site" evidence="1">
    <location>
        <position position="250"/>
    </location>
    <ligand>
        <name>(2E)-4-hydroxy-3-methylbut-2-enyl diphosphate</name>
        <dbReference type="ChEBI" id="CHEBI:128753"/>
    </ligand>
</feature>
<feature type="binding site" evidence="1">
    <location>
        <position position="288"/>
    </location>
    <ligand>
        <name>[4Fe-4S] cluster</name>
        <dbReference type="ChEBI" id="CHEBI:49883"/>
    </ligand>
</feature>
<feature type="binding site" evidence="1">
    <location>
        <position position="317"/>
    </location>
    <ligand>
        <name>(2E)-4-hydroxy-3-methylbut-2-enyl diphosphate</name>
        <dbReference type="ChEBI" id="CHEBI:128753"/>
    </ligand>
</feature>
<feature type="binding site" evidence="1">
    <location>
        <position position="317"/>
    </location>
    <ligand>
        <name>dimethylallyl diphosphate</name>
        <dbReference type="ChEBI" id="CHEBI:57623"/>
    </ligand>
</feature>
<feature type="binding site" evidence="1">
    <location>
        <position position="317"/>
    </location>
    <ligand>
        <name>isopentenyl diphosphate</name>
        <dbReference type="ChEBI" id="CHEBI:128769"/>
    </ligand>
</feature>
<feature type="binding site" evidence="1">
    <location>
        <position position="318"/>
    </location>
    <ligand>
        <name>(2E)-4-hydroxy-3-methylbut-2-enyl diphosphate</name>
        <dbReference type="ChEBI" id="CHEBI:128753"/>
    </ligand>
</feature>
<feature type="binding site" evidence="1">
    <location>
        <position position="318"/>
    </location>
    <ligand>
        <name>dimethylallyl diphosphate</name>
        <dbReference type="ChEBI" id="CHEBI:57623"/>
    </ligand>
</feature>
<feature type="binding site" evidence="1">
    <location>
        <position position="318"/>
    </location>
    <ligand>
        <name>isopentenyl diphosphate</name>
        <dbReference type="ChEBI" id="CHEBI:128769"/>
    </ligand>
</feature>
<feature type="binding site" evidence="1">
    <location>
        <position position="319"/>
    </location>
    <ligand>
        <name>(2E)-4-hydroxy-3-methylbut-2-enyl diphosphate</name>
        <dbReference type="ChEBI" id="CHEBI:128753"/>
    </ligand>
</feature>
<feature type="binding site" evidence="1">
    <location>
        <position position="319"/>
    </location>
    <ligand>
        <name>dimethylallyl diphosphate</name>
        <dbReference type="ChEBI" id="CHEBI:57623"/>
    </ligand>
</feature>
<feature type="binding site" evidence="1">
    <location>
        <position position="319"/>
    </location>
    <ligand>
        <name>isopentenyl diphosphate</name>
        <dbReference type="ChEBI" id="CHEBI:128769"/>
    </ligand>
</feature>
<feature type="binding site" evidence="1">
    <location>
        <position position="379"/>
    </location>
    <ligand>
        <name>(2E)-4-hydroxy-3-methylbut-2-enyl diphosphate</name>
        <dbReference type="ChEBI" id="CHEBI:128753"/>
    </ligand>
</feature>
<feature type="binding site" evidence="1">
    <location>
        <position position="379"/>
    </location>
    <ligand>
        <name>dimethylallyl diphosphate</name>
        <dbReference type="ChEBI" id="CHEBI:57623"/>
    </ligand>
</feature>
<feature type="binding site" evidence="1">
    <location>
        <position position="379"/>
    </location>
    <ligand>
        <name>isopentenyl diphosphate</name>
        <dbReference type="ChEBI" id="CHEBI:128769"/>
    </ligand>
</feature>
<sequence>MDTRAFKRSLHHSERYNRRGFGRAEEVAGSLEQAYQSELIQSIRENGYELREGRVTIRLAEAFGFCWGVERAVAIAYETRRHYPTERIWITNEIIHNPSVNAHLVEMNVLFIPVEEGVKDFSGVESGDVVILPAFGATVQEMQLLNERGCHIVDTTCPWVSKVWNSVERHKKNSFTSVIHGKVKHEETLATSSFAGTYLVVLDLEEAQLVCDYILGNGNREAFLKRFAGATSPGFDPDRDLSRIGVANQTTMLKSETEDIGRLFERTLLRRYGPTDLNDHFLAFNTICDATQERQDAMFSLVDEPLDLMVVIGGYNSSNTTHLQEIAVSRGIPSVHIDAPERIGPGNAVEHKPLGQDLERLEPFLPEGDLRIGITSGASTPDRVVEGVIDRLLQLAEAGQIAAEIA</sequence>
<gene>
    <name evidence="1" type="primary">ispH</name>
    <name type="ordered locus">SynRCC307_2319</name>
</gene>
<organism>
    <name type="scientific">Synechococcus sp. (strain RCC307)</name>
    <dbReference type="NCBI Taxonomy" id="316278"/>
    <lineage>
        <taxon>Bacteria</taxon>
        <taxon>Bacillati</taxon>
        <taxon>Cyanobacteriota</taxon>
        <taxon>Cyanophyceae</taxon>
        <taxon>Synechococcales</taxon>
        <taxon>Synechococcaceae</taxon>
        <taxon>Synechococcus</taxon>
    </lineage>
</organism>
<proteinExistence type="inferred from homology"/>
<reference key="1">
    <citation type="submission" date="2006-05" db="EMBL/GenBank/DDBJ databases">
        <authorList>
            <consortium name="Genoscope"/>
        </authorList>
    </citation>
    <scope>NUCLEOTIDE SEQUENCE [LARGE SCALE GENOMIC DNA]</scope>
    <source>
        <strain>RCC307</strain>
    </source>
</reference>
<name>ISPH_SYNR3</name>
<keyword id="KW-0004">4Fe-4S</keyword>
<keyword id="KW-0408">Iron</keyword>
<keyword id="KW-0411">Iron-sulfur</keyword>
<keyword id="KW-0414">Isoprene biosynthesis</keyword>
<keyword id="KW-0479">Metal-binding</keyword>
<keyword id="KW-0560">Oxidoreductase</keyword>
<keyword id="KW-1185">Reference proteome</keyword>
<evidence type="ECO:0000255" key="1">
    <source>
        <dbReference type="HAMAP-Rule" id="MF_00191"/>
    </source>
</evidence>
<protein>
    <recommendedName>
        <fullName evidence="1">4-hydroxy-3-methylbut-2-enyl diphosphate reductase</fullName>
        <shortName evidence="1">HMBPP reductase</shortName>
        <ecNumber evidence="1">1.17.7.4</ecNumber>
    </recommendedName>
</protein>
<comment type="function">
    <text evidence="1">Catalyzes the conversion of 1-hydroxy-2-methyl-2-(E)-butenyl 4-diphosphate (HMBPP) into a mixture of isopentenyl diphosphate (IPP) and dimethylallyl diphosphate (DMAPP). Acts in the terminal step of the DOXP/MEP pathway for isoprenoid precursor biosynthesis.</text>
</comment>
<comment type="catalytic activity">
    <reaction evidence="1">
        <text>isopentenyl diphosphate + 2 oxidized [2Fe-2S]-[ferredoxin] + H2O = (2E)-4-hydroxy-3-methylbut-2-enyl diphosphate + 2 reduced [2Fe-2S]-[ferredoxin] + 2 H(+)</text>
        <dbReference type="Rhea" id="RHEA:24488"/>
        <dbReference type="Rhea" id="RHEA-COMP:10000"/>
        <dbReference type="Rhea" id="RHEA-COMP:10001"/>
        <dbReference type="ChEBI" id="CHEBI:15377"/>
        <dbReference type="ChEBI" id="CHEBI:15378"/>
        <dbReference type="ChEBI" id="CHEBI:33737"/>
        <dbReference type="ChEBI" id="CHEBI:33738"/>
        <dbReference type="ChEBI" id="CHEBI:128753"/>
        <dbReference type="ChEBI" id="CHEBI:128769"/>
        <dbReference type="EC" id="1.17.7.4"/>
    </reaction>
</comment>
<comment type="catalytic activity">
    <reaction evidence="1">
        <text>dimethylallyl diphosphate + 2 oxidized [2Fe-2S]-[ferredoxin] + H2O = (2E)-4-hydroxy-3-methylbut-2-enyl diphosphate + 2 reduced [2Fe-2S]-[ferredoxin] + 2 H(+)</text>
        <dbReference type="Rhea" id="RHEA:24825"/>
        <dbReference type="Rhea" id="RHEA-COMP:10000"/>
        <dbReference type="Rhea" id="RHEA-COMP:10001"/>
        <dbReference type="ChEBI" id="CHEBI:15377"/>
        <dbReference type="ChEBI" id="CHEBI:15378"/>
        <dbReference type="ChEBI" id="CHEBI:33737"/>
        <dbReference type="ChEBI" id="CHEBI:33738"/>
        <dbReference type="ChEBI" id="CHEBI:57623"/>
        <dbReference type="ChEBI" id="CHEBI:128753"/>
        <dbReference type="EC" id="1.17.7.4"/>
    </reaction>
</comment>
<comment type="cofactor">
    <cofactor evidence="1">
        <name>[4Fe-4S] cluster</name>
        <dbReference type="ChEBI" id="CHEBI:49883"/>
    </cofactor>
    <text evidence="1">Binds 1 [4Fe-4S] cluster per subunit.</text>
</comment>
<comment type="pathway">
    <text evidence="1">Isoprenoid biosynthesis; dimethylallyl diphosphate biosynthesis; dimethylallyl diphosphate from (2E)-4-hydroxy-3-methylbutenyl diphosphate: step 1/1.</text>
</comment>
<comment type="pathway">
    <text evidence="1">Isoprenoid biosynthesis; isopentenyl diphosphate biosynthesis via DXP pathway; isopentenyl diphosphate from 1-deoxy-D-xylulose 5-phosphate: step 6/6.</text>
</comment>
<comment type="similarity">
    <text evidence="1">Belongs to the IspH family.</text>
</comment>
<dbReference type="EC" id="1.17.7.4" evidence="1"/>
<dbReference type="EMBL" id="CT978603">
    <property type="protein sequence ID" value="CAK29222.1"/>
    <property type="molecule type" value="Genomic_DNA"/>
</dbReference>
<dbReference type="SMR" id="A5GWG3"/>
<dbReference type="STRING" id="316278.SynRCC307_2319"/>
<dbReference type="KEGG" id="syr:SynRCC307_2319"/>
<dbReference type="eggNOG" id="COG0761">
    <property type="taxonomic scope" value="Bacteria"/>
</dbReference>
<dbReference type="HOGENOM" id="CLU_027486_4_0_3"/>
<dbReference type="OrthoDB" id="9804077at2"/>
<dbReference type="UniPathway" id="UPA00056">
    <property type="reaction ID" value="UER00097"/>
</dbReference>
<dbReference type="UniPathway" id="UPA00059">
    <property type="reaction ID" value="UER00105"/>
</dbReference>
<dbReference type="Proteomes" id="UP000001115">
    <property type="component" value="Chromosome"/>
</dbReference>
<dbReference type="GO" id="GO:0051539">
    <property type="term" value="F:4 iron, 4 sulfur cluster binding"/>
    <property type="evidence" value="ECO:0007669"/>
    <property type="project" value="UniProtKB-UniRule"/>
</dbReference>
<dbReference type="GO" id="GO:0051745">
    <property type="term" value="F:4-hydroxy-3-methylbut-2-enyl diphosphate reductase activity"/>
    <property type="evidence" value="ECO:0007669"/>
    <property type="project" value="UniProtKB-UniRule"/>
</dbReference>
<dbReference type="GO" id="GO:0046872">
    <property type="term" value="F:metal ion binding"/>
    <property type="evidence" value="ECO:0007669"/>
    <property type="project" value="UniProtKB-KW"/>
</dbReference>
<dbReference type="GO" id="GO:0050992">
    <property type="term" value="P:dimethylallyl diphosphate biosynthetic process"/>
    <property type="evidence" value="ECO:0007669"/>
    <property type="project" value="UniProtKB-UniRule"/>
</dbReference>
<dbReference type="GO" id="GO:0019288">
    <property type="term" value="P:isopentenyl diphosphate biosynthetic process, methylerythritol 4-phosphate pathway"/>
    <property type="evidence" value="ECO:0007669"/>
    <property type="project" value="UniProtKB-UniRule"/>
</dbReference>
<dbReference type="GO" id="GO:0016114">
    <property type="term" value="P:terpenoid biosynthetic process"/>
    <property type="evidence" value="ECO:0007669"/>
    <property type="project" value="UniProtKB-UniRule"/>
</dbReference>
<dbReference type="CDD" id="cd13944">
    <property type="entry name" value="lytB_ispH"/>
    <property type="match status" value="1"/>
</dbReference>
<dbReference type="Gene3D" id="3.40.50.11270">
    <property type="match status" value="1"/>
</dbReference>
<dbReference type="Gene3D" id="3.40.1010.20">
    <property type="entry name" value="4-hydroxy-3-methylbut-2-enyl diphosphate reductase, catalytic domain"/>
    <property type="match status" value="2"/>
</dbReference>
<dbReference type="HAMAP" id="MF_00191">
    <property type="entry name" value="IspH"/>
    <property type="match status" value="1"/>
</dbReference>
<dbReference type="InterPro" id="IPR003451">
    <property type="entry name" value="LytB/IspH"/>
</dbReference>
<dbReference type="NCBIfam" id="TIGR00216">
    <property type="entry name" value="ispH_lytB"/>
    <property type="match status" value="1"/>
</dbReference>
<dbReference type="NCBIfam" id="NF009911">
    <property type="entry name" value="PRK13371.1"/>
    <property type="match status" value="1"/>
</dbReference>
<dbReference type="PANTHER" id="PTHR31619">
    <property type="entry name" value="4-HYDROXY-3-METHYLBUT-2-ENYL DIPHOSPHATE REDUCTASE, CHLOROPLASTIC"/>
    <property type="match status" value="1"/>
</dbReference>
<dbReference type="PANTHER" id="PTHR31619:SF5">
    <property type="entry name" value="4-HYDROXY-3-METHYLBUT-2-ENYL DIPHOSPHATE REDUCTASE, CHLOROPLASTIC"/>
    <property type="match status" value="1"/>
</dbReference>
<dbReference type="Pfam" id="PF02401">
    <property type="entry name" value="LYTB"/>
    <property type="match status" value="1"/>
</dbReference>
<accession>A5GWG3</accession>